<proteinExistence type="evidence at transcript level"/>
<reference key="1">
    <citation type="submission" date="2004-04" db="EMBL/GenBank/DDBJ databases">
        <authorList>
            <person name="Ramanathan B."/>
            <person name="Minton J.E."/>
            <person name="Ross C.R."/>
            <person name="Blecha F."/>
        </authorList>
    </citation>
    <scope>NUCLEOTIDE SEQUENCE [MRNA]</scope>
    <source>
        <tissue>Bone marrow</tissue>
    </source>
</reference>
<accession>Q6PKU1</accession>
<sequence>MLQACKMEGFPLVPPPSEDLVPYDTDLYQRQTHEYYPYLSSDGESHSDHYWDFHPHHVHSEFESFAENHFTELQSVQPPQLQQLYRHMELEQMHVLDTPMAPTHASLGHQVSYLPRMCLLYPSLSPAQPSSDEEEGERQSPPLEVSDGEADGLEPGPGLLHGETGSKKKIRLYQFLLDLLRSGDMKDSIWWVDKDKGTFQFSSKHKEALAHRWGIQKGNRKKMTYQKMARALRNYGKTGEVKKVKKKLTYQFSGEVLGRGALVVRRHPPH</sequence>
<dbReference type="EMBL" id="AY600299">
    <property type="protein sequence ID" value="AAT00590.1"/>
    <property type="molecule type" value="mRNA"/>
</dbReference>
<dbReference type="RefSeq" id="NP_001001865.1">
    <property type="nucleotide sequence ID" value="NM_001001865.1"/>
</dbReference>
<dbReference type="SMR" id="Q6PKU1"/>
<dbReference type="FunCoup" id="Q6PKU1">
    <property type="interactions" value="599"/>
</dbReference>
<dbReference type="STRING" id="9823.ENSSSCP00000073995"/>
<dbReference type="PaxDb" id="9823-ENSSSCP00000014065"/>
<dbReference type="GeneID" id="414912"/>
<dbReference type="KEGG" id="ssc:414912"/>
<dbReference type="CTD" id="6688"/>
<dbReference type="eggNOG" id="KOG3805">
    <property type="taxonomic scope" value="Eukaryota"/>
</dbReference>
<dbReference type="InParanoid" id="Q6PKU1"/>
<dbReference type="OrthoDB" id="10043646at2759"/>
<dbReference type="Proteomes" id="UP000008227">
    <property type="component" value="Unplaced"/>
</dbReference>
<dbReference type="Proteomes" id="UP000314985">
    <property type="component" value="Unplaced"/>
</dbReference>
<dbReference type="Proteomes" id="UP000694570">
    <property type="component" value="Unplaced"/>
</dbReference>
<dbReference type="Proteomes" id="UP000694571">
    <property type="component" value="Unplaced"/>
</dbReference>
<dbReference type="Proteomes" id="UP000694720">
    <property type="component" value="Unplaced"/>
</dbReference>
<dbReference type="Proteomes" id="UP000694722">
    <property type="component" value="Unplaced"/>
</dbReference>
<dbReference type="Proteomes" id="UP000694723">
    <property type="component" value="Unplaced"/>
</dbReference>
<dbReference type="Proteomes" id="UP000694724">
    <property type="component" value="Unplaced"/>
</dbReference>
<dbReference type="Proteomes" id="UP000694725">
    <property type="component" value="Unplaced"/>
</dbReference>
<dbReference type="Proteomes" id="UP000694726">
    <property type="component" value="Unplaced"/>
</dbReference>
<dbReference type="Proteomes" id="UP000694727">
    <property type="component" value="Unplaced"/>
</dbReference>
<dbReference type="Proteomes" id="UP000694728">
    <property type="component" value="Unplaced"/>
</dbReference>
<dbReference type="GO" id="GO:0005634">
    <property type="term" value="C:nucleus"/>
    <property type="evidence" value="ECO:0000250"/>
    <property type="project" value="UniProtKB"/>
</dbReference>
<dbReference type="GO" id="GO:0000981">
    <property type="term" value="F:DNA-binding transcription factor activity, RNA polymerase II-specific"/>
    <property type="evidence" value="ECO:0000318"/>
    <property type="project" value="GO_Central"/>
</dbReference>
<dbReference type="GO" id="GO:0003723">
    <property type="term" value="F:RNA binding"/>
    <property type="evidence" value="ECO:0007669"/>
    <property type="project" value="UniProtKB-KW"/>
</dbReference>
<dbReference type="GO" id="GO:0043565">
    <property type="term" value="F:sequence-specific DNA binding"/>
    <property type="evidence" value="ECO:0000250"/>
    <property type="project" value="UniProtKB"/>
</dbReference>
<dbReference type="GO" id="GO:0030154">
    <property type="term" value="P:cell differentiation"/>
    <property type="evidence" value="ECO:0000318"/>
    <property type="project" value="GO_Central"/>
</dbReference>
<dbReference type="GO" id="GO:0045579">
    <property type="term" value="P:positive regulation of B cell differentiation"/>
    <property type="evidence" value="ECO:0000250"/>
    <property type="project" value="UniProtKB"/>
</dbReference>
<dbReference type="GO" id="GO:0006357">
    <property type="term" value="P:regulation of transcription by RNA polymerase II"/>
    <property type="evidence" value="ECO:0000318"/>
    <property type="project" value="GO_Central"/>
</dbReference>
<dbReference type="GO" id="GO:0045815">
    <property type="term" value="P:transcription initiation-coupled chromatin remodeling"/>
    <property type="evidence" value="ECO:0000250"/>
    <property type="project" value="UniProtKB"/>
</dbReference>
<dbReference type="FunFam" id="1.10.10.10:FF:000250">
    <property type="entry name" value="transcription factor Spi-B isoform X1"/>
    <property type="match status" value="1"/>
</dbReference>
<dbReference type="Gene3D" id="1.10.10.10">
    <property type="entry name" value="Winged helix-like DNA-binding domain superfamily/Winged helix DNA-binding domain"/>
    <property type="match status" value="1"/>
</dbReference>
<dbReference type="InterPro" id="IPR000418">
    <property type="entry name" value="Ets_dom"/>
</dbReference>
<dbReference type="InterPro" id="IPR046328">
    <property type="entry name" value="ETS_fam"/>
</dbReference>
<dbReference type="InterPro" id="IPR036388">
    <property type="entry name" value="WH-like_DNA-bd_sf"/>
</dbReference>
<dbReference type="InterPro" id="IPR036390">
    <property type="entry name" value="WH_DNA-bd_sf"/>
</dbReference>
<dbReference type="PANTHER" id="PTHR11849">
    <property type="entry name" value="ETS"/>
    <property type="match status" value="1"/>
</dbReference>
<dbReference type="PANTHER" id="PTHR11849:SF16">
    <property type="entry name" value="TRANSCRIPTION FACTOR PU.1"/>
    <property type="match status" value="1"/>
</dbReference>
<dbReference type="Pfam" id="PF00178">
    <property type="entry name" value="Ets"/>
    <property type="match status" value="1"/>
</dbReference>
<dbReference type="PRINTS" id="PR00454">
    <property type="entry name" value="ETSDOMAIN"/>
</dbReference>
<dbReference type="SMART" id="SM00413">
    <property type="entry name" value="ETS"/>
    <property type="match status" value="1"/>
</dbReference>
<dbReference type="SUPFAM" id="SSF46785">
    <property type="entry name" value="Winged helix' DNA-binding domain"/>
    <property type="match status" value="1"/>
</dbReference>
<dbReference type="PROSITE" id="PS00345">
    <property type="entry name" value="ETS_DOMAIN_1"/>
    <property type="match status" value="1"/>
</dbReference>
<dbReference type="PROSITE" id="PS00346">
    <property type="entry name" value="ETS_DOMAIN_2"/>
    <property type="match status" value="1"/>
</dbReference>
<dbReference type="PROSITE" id="PS50061">
    <property type="entry name" value="ETS_DOMAIN_3"/>
    <property type="match status" value="1"/>
</dbReference>
<feature type="chain" id="PRO_0000204134" description="Transcription factor PU.1">
    <location>
        <begin position="1"/>
        <end position="270"/>
    </location>
</feature>
<feature type="DNA-binding region" description="ETS" evidence="4">
    <location>
        <begin position="170"/>
        <end position="253"/>
    </location>
</feature>
<feature type="region of interest" description="Disordered" evidence="5">
    <location>
        <begin position="124"/>
        <end position="162"/>
    </location>
</feature>
<feature type="compositionally biased region" description="Low complexity" evidence="5">
    <location>
        <begin position="153"/>
        <end position="162"/>
    </location>
</feature>
<feature type="binding site" description="forms a salt bridge with the phosphate backbone of the opposite strand downstream of the GGAA core sequence" evidence="1">
    <location>
        <position position="217"/>
    </location>
    <ligand>
        <name>DNA</name>
        <dbReference type="ChEBI" id="CHEBI:16991"/>
    </ligand>
</feature>
<feature type="binding site" description="contacts bases in the GGAA sequence in the major groove" evidence="1">
    <location>
        <position position="230"/>
    </location>
    <ligand>
        <name>DNA</name>
        <dbReference type="ChEBI" id="CHEBI:16991"/>
    </ligand>
</feature>
<feature type="binding site" description="contacts bases in the GGAA sequence in the major groove" evidence="1">
    <location>
        <position position="233"/>
    </location>
    <ligand>
        <name>DNA</name>
        <dbReference type="ChEBI" id="CHEBI:16991"/>
    </ligand>
</feature>
<feature type="binding site" description="contacts the phosphate backbone of the GGAA sequence in the minor groove upstream" evidence="1">
    <location>
        <position position="243"/>
    </location>
    <ligand>
        <name>DNA</name>
        <dbReference type="ChEBI" id="CHEBI:16991"/>
    </ligand>
</feature>
<feature type="modified residue" description="Phosphoserine" evidence="2">
    <location>
        <position position="140"/>
    </location>
</feature>
<feature type="modified residue" description="Phosphoserine" evidence="2">
    <location>
        <position position="146"/>
    </location>
</feature>
<organism>
    <name type="scientific">Sus scrofa</name>
    <name type="common">Pig</name>
    <dbReference type="NCBI Taxonomy" id="9823"/>
    <lineage>
        <taxon>Eukaryota</taxon>
        <taxon>Metazoa</taxon>
        <taxon>Chordata</taxon>
        <taxon>Craniata</taxon>
        <taxon>Vertebrata</taxon>
        <taxon>Euteleostomi</taxon>
        <taxon>Mammalia</taxon>
        <taxon>Eutheria</taxon>
        <taxon>Laurasiatheria</taxon>
        <taxon>Artiodactyla</taxon>
        <taxon>Suina</taxon>
        <taxon>Suidae</taxon>
        <taxon>Sus</taxon>
    </lineage>
</organism>
<protein>
    <recommendedName>
        <fullName>Transcription factor PU.1</fullName>
    </recommendedName>
</protein>
<evidence type="ECO:0000250" key="1">
    <source>
        <dbReference type="UniProtKB" id="P17433"/>
    </source>
</evidence>
<evidence type="ECO:0000250" key="2">
    <source>
        <dbReference type="UniProtKB" id="P17947"/>
    </source>
</evidence>
<evidence type="ECO:0000250" key="3">
    <source>
        <dbReference type="UniProtKB" id="Q6BDS1"/>
    </source>
</evidence>
<evidence type="ECO:0000255" key="4">
    <source>
        <dbReference type="PROSITE-ProRule" id="PRU00237"/>
    </source>
</evidence>
<evidence type="ECO:0000256" key="5">
    <source>
        <dbReference type="SAM" id="MobiDB-lite"/>
    </source>
</evidence>
<evidence type="ECO:0000305" key="6"/>
<comment type="function">
    <text evidence="1 2 3">Pioneer transcription factor, which controls hematopoietic cell fate by decompacting stem cell heterochromatin and allowing other transcription factors to enter otherwise inaccessible genomic sites. Once in open chromatin, can directly control gene expression by binding genetic regulatory elements and can also more broadly influence transcription by recruiting transcription factors, such as interferon regulatory factors (IRFs), to otherwise inaccessible genomic regions (By similarity). Transcriptionally activates genes important for myeloid and lymphoid lineages, such as CSF1R (By similarity). Transcriptional activation from certain promoters, possibly containing low affinity binding sites, is achieved cooperatively with other transcription factors. FCER1A transactivation is achieved in cooperation with GATA1 (By similarity). May be particularly important for the pro- to pre-B cell transition. Binds (via the ETS domain) onto the purine-rich DNA core sequence 5'-GAGGAA-3', also known as the PU-box (By similarity). In vitro can bind RNA and interfere with pre-mRNA splicing (By similarity).</text>
</comment>
<comment type="activity regulation">
    <text evidence="1">Transcriptional activity at macrophage-specific genes is inhibited by interaction with GFI1, which results in the inhibition of SPI1-induced macrophage differentiation of myeloid progenitor cells, but not that of the granulocyte lineage.</text>
</comment>
<comment type="subunit">
    <text evidence="1 2">Binds DNA as a monomer. Can form homomers (By similarity). Directly interacts with CEBPD/NF-IL6-beta; this interaction does not affect DNA-binding properties of each partner. Interacts with NONO/p54(nrb) (By similarity). Interacts with RUNX1/AML1. Interacts with GFI1; the interaction represses SPI1 transcriptional activity, hence blocks SPI1-induced macrophage differentiation of myeloid progenitor cells. Interacts with CEBPE. Interacts with IRF4/Pip and IRF8. Interacts with JUN. Interacts with RB1. Interacts with TBP (By similarity).</text>
</comment>
<comment type="subcellular location">
    <subcellularLocation>
        <location evidence="4">Nucleus</location>
    </subcellularLocation>
</comment>
<comment type="similarity">
    <text evidence="6">Belongs to the ETS family.</text>
</comment>
<keyword id="KW-0010">Activator</keyword>
<keyword id="KW-0217">Developmental protein</keyword>
<keyword id="KW-0238">DNA-binding</keyword>
<keyword id="KW-0539">Nucleus</keyword>
<keyword id="KW-0597">Phosphoprotein</keyword>
<keyword id="KW-1185">Reference proteome</keyword>
<keyword id="KW-0694">RNA-binding</keyword>
<keyword id="KW-0804">Transcription</keyword>
<keyword id="KW-0805">Transcription regulation</keyword>
<name>SPI1_PIG</name>
<gene>
    <name type="primary">SPI1</name>
</gene>